<accession>P00906</accession>
<organism>
    <name type="scientific">Shigella dysenteriae</name>
    <dbReference type="NCBI Taxonomy" id="622"/>
    <lineage>
        <taxon>Bacteria</taxon>
        <taxon>Pseudomonadati</taxon>
        <taxon>Pseudomonadota</taxon>
        <taxon>Gammaproteobacteria</taxon>
        <taxon>Enterobacterales</taxon>
        <taxon>Enterobacteriaceae</taxon>
        <taxon>Shigella</taxon>
    </lineage>
</organism>
<gene>
    <name type="primary">trpG-TRPD</name>
</gene>
<comment type="catalytic activity">
    <reaction>
        <text>chorismate + L-glutamine = anthranilate + pyruvate + L-glutamate + H(+)</text>
        <dbReference type="Rhea" id="RHEA:21732"/>
        <dbReference type="ChEBI" id="CHEBI:15361"/>
        <dbReference type="ChEBI" id="CHEBI:15378"/>
        <dbReference type="ChEBI" id="CHEBI:16567"/>
        <dbReference type="ChEBI" id="CHEBI:29748"/>
        <dbReference type="ChEBI" id="CHEBI:29985"/>
        <dbReference type="ChEBI" id="CHEBI:58359"/>
        <dbReference type="EC" id="4.1.3.27"/>
    </reaction>
</comment>
<comment type="catalytic activity">
    <reaction>
        <text>N-(5-phospho-beta-D-ribosyl)anthranilate + diphosphate = 5-phospho-alpha-D-ribose 1-diphosphate + anthranilate</text>
        <dbReference type="Rhea" id="RHEA:11768"/>
        <dbReference type="ChEBI" id="CHEBI:16567"/>
        <dbReference type="ChEBI" id="CHEBI:18277"/>
        <dbReference type="ChEBI" id="CHEBI:33019"/>
        <dbReference type="ChEBI" id="CHEBI:58017"/>
        <dbReference type="EC" id="2.4.2.18"/>
    </reaction>
</comment>
<comment type="pathway">
    <text>Amino-acid biosynthesis; L-tryptophan biosynthesis; L-tryptophan from chorismate: step 1/5.</text>
</comment>
<comment type="pathway">
    <text>Amino-acid biosynthesis; L-tryptophan biosynthesis; L-tryptophan from chorismate: step 2/5.</text>
</comment>
<comment type="subunit">
    <text>Tetramer of two components I and two components II.</text>
</comment>
<comment type="miscellaneous">
    <text>Component I catalyzes the formation of anthranilate using ammonia rather than glutamine, whereas component II provides glutamine amidotransferase activity.</text>
</comment>
<comment type="miscellaneous">
    <text>In E.coli and certain other bacteria, component II is larger and its C-terminal two thirds has anthranilate phosphoribosyltransferase activity.</text>
</comment>
<feature type="initiator methionine" description="Removed">
    <location>
        <position position="1"/>
    </location>
</feature>
<feature type="chain" id="PRO_0000056899" description="Anthranilate synthase component II">
    <location>
        <begin position="2"/>
        <end position="201" status="greater than"/>
    </location>
</feature>
<feature type="domain" description="Glutamine amidotransferase type-1" evidence="2">
    <location>
        <begin position="3"/>
        <end position="196"/>
    </location>
</feature>
<feature type="active site" description="Nucleophile; for GATase activity" evidence="2">
    <location>
        <position position="84"/>
    </location>
</feature>
<feature type="active site" description="For GATase activity" evidence="2">
    <location>
        <position position="170"/>
    </location>
</feature>
<feature type="active site" description="For GATase activity" evidence="2">
    <location>
        <position position="172"/>
    </location>
</feature>
<feature type="binding site" evidence="1">
    <location>
        <begin position="57"/>
        <end position="59"/>
    </location>
    <ligand>
        <name>L-glutamine</name>
        <dbReference type="ChEBI" id="CHEBI:58359"/>
    </ligand>
</feature>
<feature type="binding site" evidence="1">
    <location>
        <position position="88"/>
    </location>
    <ligand>
        <name>L-glutamine</name>
        <dbReference type="ChEBI" id="CHEBI:58359"/>
    </ligand>
</feature>
<feature type="binding site" evidence="1">
    <location>
        <begin position="134"/>
        <end position="135"/>
    </location>
    <ligand>
        <name>L-glutamine</name>
        <dbReference type="ChEBI" id="CHEBI:58359"/>
    </ligand>
</feature>
<feature type="non-terminal residue">
    <location>
        <position position="201"/>
    </location>
</feature>
<sequence>MADILLLDNIDSFTYNLADQLRSNGHNVVIYRNHIPAQTLIERLATMSNPVLMLSPGPGVPSEAGCMPELLTRLSGKLPIIGICLGHQAIVEAYGGYVGQAGEILHGKASSIEHDGQAMFAGLTNPLPVARYHSLVGSNIPAGLTINAHFNGMVMAVRHDADRICGFQFHPESILTTQGARLLEQTLAWAQRKLEPTNTLQ</sequence>
<protein>
    <recommendedName>
        <fullName>Anthranilate synthase component II</fullName>
        <ecNumber>4.1.3.27</ecNumber>
    </recommendedName>
    <domain>
        <recommendedName>
            <fullName>Glutamine amidotransferase</fullName>
        </recommendedName>
    </domain>
    <domain>
        <recommendedName>
            <fullName>Anthranilate phosphoribosyltransferase</fullName>
            <ecNumber>2.4.2.18</ecNumber>
        </recommendedName>
    </domain>
</protein>
<evidence type="ECO:0000250" key="1">
    <source>
        <dbReference type="UniProtKB" id="P00900"/>
    </source>
</evidence>
<evidence type="ECO:0000255" key="2">
    <source>
        <dbReference type="PROSITE-ProRule" id="PRU00605"/>
    </source>
</evidence>
<keyword id="KW-0028">Amino-acid biosynthesis</keyword>
<keyword id="KW-0057">Aromatic amino acid biosynthesis</keyword>
<keyword id="KW-0315">Glutamine amidotransferase</keyword>
<keyword id="KW-0456">Lyase</keyword>
<keyword id="KW-0511">Multifunctional enzyme</keyword>
<keyword id="KW-0808">Transferase</keyword>
<keyword id="KW-0822">Tryptophan biosynthesis</keyword>
<proteinExistence type="predicted"/>
<reference key="1">
    <citation type="journal article" date="1980" name="J. Mol. Biol.">
        <title>Nucleotide sequences of the trpG regions of Escherichia coli, Shigella dysenteriae, Salmonella typhimurium and Serratia marcescens.</title>
        <authorList>
            <person name="Nichols B.P."/>
            <person name="Miozzari G.F."/>
            <person name="van Cleemput M."/>
            <person name="Bennett G.N."/>
            <person name="Yanofsky C."/>
        </authorList>
    </citation>
    <scope>NUCLEOTIDE SEQUENCE [GENOMIC DNA]</scope>
</reference>
<dbReference type="EC" id="4.1.3.27"/>
<dbReference type="EC" id="2.4.2.18"/>
<dbReference type="EMBL" id="J01787">
    <property type="protein sequence ID" value="AAA57307.1"/>
    <property type="molecule type" value="Genomic_DNA"/>
</dbReference>
<dbReference type="PIR" id="B92860">
    <property type="entry name" value="NNEB2D"/>
</dbReference>
<dbReference type="SMR" id="P00906"/>
<dbReference type="MEROPS" id="C26.960"/>
<dbReference type="UniPathway" id="UPA00035">
    <property type="reaction ID" value="UER00040"/>
</dbReference>
<dbReference type="UniPathway" id="UPA00035">
    <property type="reaction ID" value="UER00041"/>
</dbReference>
<dbReference type="GO" id="GO:0005829">
    <property type="term" value="C:cytosol"/>
    <property type="evidence" value="ECO:0007669"/>
    <property type="project" value="TreeGrafter"/>
</dbReference>
<dbReference type="GO" id="GO:0004048">
    <property type="term" value="F:anthranilate phosphoribosyltransferase activity"/>
    <property type="evidence" value="ECO:0007669"/>
    <property type="project" value="UniProtKB-EC"/>
</dbReference>
<dbReference type="GO" id="GO:0004049">
    <property type="term" value="F:anthranilate synthase activity"/>
    <property type="evidence" value="ECO:0007669"/>
    <property type="project" value="UniProtKB-EC"/>
</dbReference>
<dbReference type="GO" id="GO:0000162">
    <property type="term" value="P:L-tryptophan biosynthetic process"/>
    <property type="evidence" value="ECO:0007669"/>
    <property type="project" value="UniProtKB-UniPathway"/>
</dbReference>
<dbReference type="GO" id="GO:0002047">
    <property type="term" value="P:phenazine biosynthetic process"/>
    <property type="evidence" value="ECO:0007669"/>
    <property type="project" value="TreeGrafter"/>
</dbReference>
<dbReference type="CDD" id="cd01743">
    <property type="entry name" value="GATase1_Anthranilate_Synthase"/>
    <property type="match status" value="1"/>
</dbReference>
<dbReference type="FunFam" id="3.40.50.880:FF:000021">
    <property type="entry name" value="Anthranilate phosphoribosyltransferase"/>
    <property type="match status" value="1"/>
</dbReference>
<dbReference type="Gene3D" id="3.40.50.880">
    <property type="match status" value="1"/>
</dbReference>
<dbReference type="InterPro" id="IPR050472">
    <property type="entry name" value="Anth_synth/Amidotransfase"/>
</dbReference>
<dbReference type="InterPro" id="IPR029062">
    <property type="entry name" value="Class_I_gatase-like"/>
</dbReference>
<dbReference type="InterPro" id="IPR017926">
    <property type="entry name" value="GATASE"/>
</dbReference>
<dbReference type="InterPro" id="IPR006221">
    <property type="entry name" value="TrpG/PapA_dom"/>
</dbReference>
<dbReference type="NCBIfam" id="TIGR00566">
    <property type="entry name" value="trpG_papA"/>
    <property type="match status" value="1"/>
</dbReference>
<dbReference type="PANTHER" id="PTHR43418:SF2">
    <property type="entry name" value="BIFUNCTIONAL PROTEIN TRPGD"/>
    <property type="match status" value="1"/>
</dbReference>
<dbReference type="PANTHER" id="PTHR43418">
    <property type="entry name" value="MULTIFUNCTIONAL TRYPTOPHAN BIOSYNTHESIS PROTEIN-RELATED"/>
    <property type="match status" value="1"/>
</dbReference>
<dbReference type="Pfam" id="PF00117">
    <property type="entry name" value="GATase"/>
    <property type="match status" value="1"/>
</dbReference>
<dbReference type="PRINTS" id="PR00097">
    <property type="entry name" value="ANTSNTHASEII"/>
</dbReference>
<dbReference type="PRINTS" id="PR00099">
    <property type="entry name" value="CPSGATASE"/>
</dbReference>
<dbReference type="PRINTS" id="PR00096">
    <property type="entry name" value="GATASE"/>
</dbReference>
<dbReference type="SUPFAM" id="SSF52317">
    <property type="entry name" value="Class I glutamine amidotransferase-like"/>
    <property type="match status" value="1"/>
</dbReference>
<dbReference type="PROSITE" id="PS51273">
    <property type="entry name" value="GATASE_TYPE_1"/>
    <property type="match status" value="1"/>
</dbReference>
<name>TRPG_SHIDY</name>